<keyword id="KW-0963">Cytoplasm</keyword>
<keyword id="KW-0285">Flavoprotein</keyword>
<keyword id="KW-0288">FMN</keyword>
<keyword id="KW-0413">Isomerase</keyword>
<keyword id="KW-0414">Isoprene biosynthesis</keyword>
<keyword id="KW-0460">Magnesium</keyword>
<keyword id="KW-0479">Metal-binding</keyword>
<keyword id="KW-0521">NADP</keyword>
<comment type="function">
    <text evidence="1">Involved in the biosynthesis of isoprenoids. Catalyzes the 1,3-allylic rearrangement of the homoallylic substrate isopentenyl (IPP) to its allylic isomer, dimethylallyl diphosphate (DMAPP).</text>
</comment>
<comment type="catalytic activity">
    <reaction evidence="1">
        <text>isopentenyl diphosphate = dimethylallyl diphosphate</text>
        <dbReference type="Rhea" id="RHEA:23284"/>
        <dbReference type="ChEBI" id="CHEBI:57623"/>
        <dbReference type="ChEBI" id="CHEBI:128769"/>
        <dbReference type="EC" id="5.3.3.2"/>
    </reaction>
</comment>
<comment type="cofactor">
    <cofactor evidence="1">
        <name>FMN</name>
        <dbReference type="ChEBI" id="CHEBI:58210"/>
    </cofactor>
</comment>
<comment type="cofactor">
    <cofactor evidence="1">
        <name>NADPH</name>
        <dbReference type="ChEBI" id="CHEBI:57783"/>
    </cofactor>
</comment>
<comment type="cofactor">
    <cofactor evidence="1">
        <name>Mg(2+)</name>
        <dbReference type="ChEBI" id="CHEBI:18420"/>
    </cofactor>
</comment>
<comment type="subunit">
    <text evidence="1">Homooctamer. Dimer of tetramers.</text>
</comment>
<comment type="subcellular location">
    <subcellularLocation>
        <location evidence="1">Cytoplasm</location>
    </subcellularLocation>
</comment>
<comment type="similarity">
    <text evidence="1">Belongs to the IPP isomerase type 2 family.</text>
</comment>
<proteinExistence type="inferred from homology"/>
<dbReference type="EC" id="5.3.3.2" evidence="1"/>
<dbReference type="EMBL" id="AE006914">
    <property type="protein sequence ID" value="AAL03282.1"/>
    <property type="molecule type" value="Genomic_DNA"/>
</dbReference>
<dbReference type="PIR" id="H97792">
    <property type="entry name" value="H97792"/>
</dbReference>
<dbReference type="RefSeq" id="WP_010977362.1">
    <property type="nucleotide sequence ID" value="NC_003103.1"/>
</dbReference>
<dbReference type="SMR" id="Q92HM7"/>
<dbReference type="GeneID" id="928549"/>
<dbReference type="KEGG" id="rco:RC0744"/>
<dbReference type="PATRIC" id="fig|272944.4.peg.846"/>
<dbReference type="HOGENOM" id="CLU_065515_1_0_5"/>
<dbReference type="Proteomes" id="UP000000816">
    <property type="component" value="Chromosome"/>
</dbReference>
<dbReference type="GO" id="GO:0005737">
    <property type="term" value="C:cytoplasm"/>
    <property type="evidence" value="ECO:0007669"/>
    <property type="project" value="UniProtKB-SubCell"/>
</dbReference>
<dbReference type="GO" id="GO:0010181">
    <property type="term" value="F:FMN binding"/>
    <property type="evidence" value="ECO:0007669"/>
    <property type="project" value="UniProtKB-UniRule"/>
</dbReference>
<dbReference type="GO" id="GO:0004452">
    <property type="term" value="F:isopentenyl-diphosphate delta-isomerase activity"/>
    <property type="evidence" value="ECO:0007669"/>
    <property type="project" value="UniProtKB-UniRule"/>
</dbReference>
<dbReference type="GO" id="GO:0000287">
    <property type="term" value="F:magnesium ion binding"/>
    <property type="evidence" value="ECO:0007669"/>
    <property type="project" value="UniProtKB-UniRule"/>
</dbReference>
<dbReference type="GO" id="GO:0070402">
    <property type="term" value="F:NADPH binding"/>
    <property type="evidence" value="ECO:0007669"/>
    <property type="project" value="UniProtKB-UniRule"/>
</dbReference>
<dbReference type="GO" id="GO:0016491">
    <property type="term" value="F:oxidoreductase activity"/>
    <property type="evidence" value="ECO:0007669"/>
    <property type="project" value="InterPro"/>
</dbReference>
<dbReference type="GO" id="GO:0008299">
    <property type="term" value="P:isoprenoid biosynthetic process"/>
    <property type="evidence" value="ECO:0007669"/>
    <property type="project" value="UniProtKB-UniRule"/>
</dbReference>
<dbReference type="CDD" id="cd02811">
    <property type="entry name" value="IDI-2_FMN"/>
    <property type="match status" value="1"/>
</dbReference>
<dbReference type="Gene3D" id="3.20.20.70">
    <property type="entry name" value="Aldolase class I"/>
    <property type="match status" value="1"/>
</dbReference>
<dbReference type="HAMAP" id="MF_00354">
    <property type="entry name" value="Idi_2"/>
    <property type="match status" value="1"/>
</dbReference>
<dbReference type="InterPro" id="IPR013785">
    <property type="entry name" value="Aldolase_TIM"/>
</dbReference>
<dbReference type="InterPro" id="IPR000262">
    <property type="entry name" value="FMN-dep_DH"/>
</dbReference>
<dbReference type="InterPro" id="IPR011179">
    <property type="entry name" value="IPdP_isomerase"/>
</dbReference>
<dbReference type="NCBIfam" id="TIGR02151">
    <property type="entry name" value="IPP_isom_2"/>
    <property type="match status" value="1"/>
</dbReference>
<dbReference type="PANTHER" id="PTHR43665">
    <property type="entry name" value="ISOPENTENYL-DIPHOSPHATE DELTA-ISOMERASE"/>
    <property type="match status" value="1"/>
</dbReference>
<dbReference type="PANTHER" id="PTHR43665:SF1">
    <property type="entry name" value="ISOPENTENYL-DIPHOSPHATE DELTA-ISOMERASE"/>
    <property type="match status" value="1"/>
</dbReference>
<dbReference type="Pfam" id="PF01070">
    <property type="entry name" value="FMN_dh"/>
    <property type="match status" value="2"/>
</dbReference>
<dbReference type="PIRSF" id="PIRSF003314">
    <property type="entry name" value="IPP_isomerase"/>
    <property type="match status" value="1"/>
</dbReference>
<dbReference type="SUPFAM" id="SSF51395">
    <property type="entry name" value="FMN-linked oxidoreductases"/>
    <property type="match status" value="1"/>
</dbReference>
<protein>
    <recommendedName>
        <fullName evidence="1">Isopentenyl-diphosphate delta-isomerase</fullName>
        <shortName evidence="1">IPP isomerase</shortName>
        <ecNumber evidence="1">5.3.3.2</ecNumber>
    </recommendedName>
    <alternativeName>
        <fullName evidence="1">Isopentenyl diphosphate:dimethylallyl diphosphate isomerase</fullName>
    </alternativeName>
    <alternativeName>
        <fullName evidence="1">Isopentenyl pyrophosphate isomerase</fullName>
    </alternativeName>
    <alternativeName>
        <fullName evidence="1">Type 2 isopentenyl diphosphate isomerase</fullName>
        <shortName evidence="1">IDI-2</shortName>
    </alternativeName>
</protein>
<accession>Q92HM7</accession>
<evidence type="ECO:0000255" key="1">
    <source>
        <dbReference type="HAMAP-Rule" id="MF_00354"/>
    </source>
</evidence>
<reference key="1">
    <citation type="journal article" date="2001" name="Science">
        <title>Mechanisms of evolution in Rickettsia conorii and R. prowazekii.</title>
        <authorList>
            <person name="Ogata H."/>
            <person name="Audic S."/>
            <person name="Renesto-Audiffren P."/>
            <person name="Fournier P.-E."/>
            <person name="Barbe V."/>
            <person name="Samson D."/>
            <person name="Roux V."/>
            <person name="Cossart P."/>
            <person name="Weissenbach J."/>
            <person name="Claverie J.-M."/>
            <person name="Raoult D."/>
        </authorList>
    </citation>
    <scope>NUCLEOTIDE SEQUENCE [LARGE SCALE GENOMIC DNA]</scope>
    <source>
        <strain>ATCC VR-613 / Malish 7</strain>
    </source>
</reference>
<feature type="chain" id="PRO_0000134418" description="Isopentenyl-diphosphate delta-isomerase">
    <location>
        <begin position="1"/>
        <end position="342"/>
    </location>
</feature>
<feature type="binding site" evidence="1">
    <location>
        <begin position="11"/>
        <end position="12"/>
    </location>
    <ligand>
        <name>substrate</name>
    </ligand>
</feature>
<feature type="binding site" evidence="1">
    <location>
        <position position="68"/>
    </location>
    <ligand>
        <name>FMN</name>
        <dbReference type="ChEBI" id="CHEBI:58210"/>
    </ligand>
</feature>
<feature type="binding site" evidence="1">
    <location>
        <begin position="69"/>
        <end position="71"/>
    </location>
    <ligand>
        <name>FMN</name>
        <dbReference type="ChEBI" id="CHEBI:58210"/>
    </ligand>
</feature>
<feature type="binding site" evidence="1">
    <location>
        <begin position="99"/>
        <end position="101"/>
    </location>
    <ligand>
        <name>substrate</name>
    </ligand>
</feature>
<feature type="binding site" evidence="1">
    <location>
        <position position="99"/>
    </location>
    <ligand>
        <name>FMN</name>
        <dbReference type="ChEBI" id="CHEBI:58210"/>
    </ligand>
</feature>
<feature type="binding site" evidence="1">
    <location>
        <position position="127"/>
    </location>
    <ligand>
        <name>FMN</name>
        <dbReference type="ChEBI" id="CHEBI:58210"/>
    </ligand>
</feature>
<feature type="binding site" evidence="1">
    <location>
        <position position="162"/>
    </location>
    <ligand>
        <name>substrate</name>
    </ligand>
</feature>
<feature type="binding site" evidence="1">
    <location>
        <position position="163"/>
    </location>
    <ligand>
        <name>Mg(2+)</name>
        <dbReference type="ChEBI" id="CHEBI:18420"/>
    </ligand>
</feature>
<feature type="binding site" evidence="1">
    <location>
        <position position="194"/>
    </location>
    <ligand>
        <name>FMN</name>
        <dbReference type="ChEBI" id="CHEBI:58210"/>
    </ligand>
</feature>
<feature type="binding site" evidence="1">
    <location>
        <position position="224"/>
    </location>
    <ligand>
        <name>FMN</name>
        <dbReference type="ChEBI" id="CHEBI:58210"/>
    </ligand>
</feature>
<feature type="binding site" evidence="1">
    <location>
        <begin position="274"/>
        <end position="276"/>
    </location>
    <ligand>
        <name>FMN</name>
        <dbReference type="ChEBI" id="CHEBI:58210"/>
    </ligand>
</feature>
<feature type="binding site" evidence="1">
    <location>
        <begin position="295"/>
        <end position="296"/>
    </location>
    <ligand>
        <name>FMN</name>
        <dbReference type="ChEBI" id="CHEBI:58210"/>
    </ligand>
</feature>
<organism>
    <name type="scientific">Rickettsia conorii (strain ATCC VR-613 / Malish 7)</name>
    <dbReference type="NCBI Taxonomy" id="272944"/>
    <lineage>
        <taxon>Bacteria</taxon>
        <taxon>Pseudomonadati</taxon>
        <taxon>Pseudomonadota</taxon>
        <taxon>Alphaproteobacteria</taxon>
        <taxon>Rickettsiales</taxon>
        <taxon>Rickettsiaceae</taxon>
        <taxon>Rickettsieae</taxon>
        <taxon>Rickettsia</taxon>
        <taxon>spotted fever group</taxon>
    </lineage>
</organism>
<gene>
    <name evidence="1" type="primary">fni</name>
    <name type="ordered locus">RC0744</name>
</gene>
<name>IDI2_RICCN</name>
<sequence>MLKDQNLDIERKQDHIEINLTKNVESTLKSGFESIHFIHNALPEINYDSVNTTTTFLGKSLQAPILISSMTGGTTRARDINYRLAQVAQKAGIAMGLGSMRVLLTEPDTIKTFAVRHIAPDIPLLANIGAVQLNYGVTPKECQYLVDAIKADALILHLNVLQELTQPEGNRNWEKLLPKIREVVNYLSIPVIVKEVGYGLSKKVAESLIDAGVKVLDIAGSGGTSWSQVEAYRATNSLQNRIASSFINWGIPTLDSLKMVREVSKDIPIITSGGFKSGIDGAKAIRIGANIFGLAGQFLKAADTSESLLSEEIQLIIEQLKITMLCTGSRTLKDLAKAEIRL</sequence>